<proteinExistence type="inferred from homology"/>
<dbReference type="EC" id="6.3.3.1" evidence="1"/>
<dbReference type="EMBL" id="AE014133">
    <property type="protein sequence ID" value="AAN57823.1"/>
    <property type="molecule type" value="Genomic_DNA"/>
</dbReference>
<dbReference type="RefSeq" id="NP_720517.1">
    <property type="nucleotide sequence ID" value="NC_004350.2"/>
</dbReference>
<dbReference type="RefSeq" id="WP_002263128.1">
    <property type="nucleotide sequence ID" value="NC_004350.2"/>
</dbReference>
<dbReference type="SMR" id="Q8DWL1"/>
<dbReference type="STRING" id="210007.SMU_34"/>
<dbReference type="KEGG" id="smu:SMU_34"/>
<dbReference type="PATRIC" id="fig|210007.7.peg.29"/>
<dbReference type="eggNOG" id="COG0150">
    <property type="taxonomic scope" value="Bacteria"/>
</dbReference>
<dbReference type="HOGENOM" id="CLU_047116_0_0_9"/>
<dbReference type="OrthoDB" id="9802507at2"/>
<dbReference type="PhylomeDB" id="Q8DWL1"/>
<dbReference type="UniPathway" id="UPA00074">
    <property type="reaction ID" value="UER00129"/>
</dbReference>
<dbReference type="Proteomes" id="UP000002512">
    <property type="component" value="Chromosome"/>
</dbReference>
<dbReference type="GO" id="GO:0005829">
    <property type="term" value="C:cytosol"/>
    <property type="evidence" value="ECO:0007669"/>
    <property type="project" value="TreeGrafter"/>
</dbReference>
<dbReference type="GO" id="GO:0005524">
    <property type="term" value="F:ATP binding"/>
    <property type="evidence" value="ECO:0007669"/>
    <property type="project" value="UniProtKB-KW"/>
</dbReference>
<dbReference type="GO" id="GO:0004637">
    <property type="term" value="F:phosphoribosylamine-glycine ligase activity"/>
    <property type="evidence" value="ECO:0007669"/>
    <property type="project" value="TreeGrafter"/>
</dbReference>
<dbReference type="GO" id="GO:0004641">
    <property type="term" value="F:phosphoribosylformylglycinamidine cyclo-ligase activity"/>
    <property type="evidence" value="ECO:0007669"/>
    <property type="project" value="UniProtKB-UniRule"/>
</dbReference>
<dbReference type="GO" id="GO:0006189">
    <property type="term" value="P:'de novo' IMP biosynthetic process"/>
    <property type="evidence" value="ECO:0007669"/>
    <property type="project" value="UniProtKB-UniRule"/>
</dbReference>
<dbReference type="GO" id="GO:0046084">
    <property type="term" value="P:adenine biosynthetic process"/>
    <property type="evidence" value="ECO:0007669"/>
    <property type="project" value="TreeGrafter"/>
</dbReference>
<dbReference type="CDD" id="cd02196">
    <property type="entry name" value="PurM"/>
    <property type="match status" value="1"/>
</dbReference>
<dbReference type="FunFam" id="3.30.1330.10:FF:000001">
    <property type="entry name" value="Phosphoribosylformylglycinamidine cyclo-ligase"/>
    <property type="match status" value="1"/>
</dbReference>
<dbReference type="FunFam" id="3.90.650.10:FF:000011">
    <property type="entry name" value="Phosphoribosylformylglycinamidine cyclo-ligase"/>
    <property type="match status" value="1"/>
</dbReference>
<dbReference type="Gene3D" id="3.90.650.10">
    <property type="entry name" value="PurM-like C-terminal domain"/>
    <property type="match status" value="1"/>
</dbReference>
<dbReference type="Gene3D" id="3.30.1330.10">
    <property type="entry name" value="PurM-like, N-terminal domain"/>
    <property type="match status" value="1"/>
</dbReference>
<dbReference type="HAMAP" id="MF_00741">
    <property type="entry name" value="AIRS"/>
    <property type="match status" value="1"/>
</dbReference>
<dbReference type="InterPro" id="IPR010918">
    <property type="entry name" value="PurM-like_C_dom"/>
</dbReference>
<dbReference type="InterPro" id="IPR036676">
    <property type="entry name" value="PurM-like_C_sf"/>
</dbReference>
<dbReference type="InterPro" id="IPR016188">
    <property type="entry name" value="PurM-like_N"/>
</dbReference>
<dbReference type="InterPro" id="IPR036921">
    <property type="entry name" value="PurM-like_N_sf"/>
</dbReference>
<dbReference type="InterPro" id="IPR004733">
    <property type="entry name" value="PurM_cligase"/>
</dbReference>
<dbReference type="NCBIfam" id="TIGR00878">
    <property type="entry name" value="purM"/>
    <property type="match status" value="1"/>
</dbReference>
<dbReference type="PANTHER" id="PTHR10520:SF12">
    <property type="entry name" value="TRIFUNCTIONAL PURINE BIOSYNTHETIC PROTEIN ADENOSINE-3"/>
    <property type="match status" value="1"/>
</dbReference>
<dbReference type="PANTHER" id="PTHR10520">
    <property type="entry name" value="TRIFUNCTIONAL PURINE BIOSYNTHETIC PROTEIN ADENOSINE-3-RELATED"/>
    <property type="match status" value="1"/>
</dbReference>
<dbReference type="Pfam" id="PF00586">
    <property type="entry name" value="AIRS"/>
    <property type="match status" value="1"/>
</dbReference>
<dbReference type="Pfam" id="PF02769">
    <property type="entry name" value="AIRS_C"/>
    <property type="match status" value="1"/>
</dbReference>
<dbReference type="SUPFAM" id="SSF56042">
    <property type="entry name" value="PurM C-terminal domain-like"/>
    <property type="match status" value="1"/>
</dbReference>
<dbReference type="SUPFAM" id="SSF55326">
    <property type="entry name" value="PurM N-terminal domain-like"/>
    <property type="match status" value="1"/>
</dbReference>
<evidence type="ECO:0000255" key="1">
    <source>
        <dbReference type="HAMAP-Rule" id="MF_00741"/>
    </source>
</evidence>
<sequence length="340" mass="36512">MTEKNAYAQSGVDIEAGYEVVARIKKHVARTERLGVMGALGGFGGMFDLSQLDVKEPVLISGTDGVGTKLMLAIKYDKHNTIGQDCVAMCVNDIIAAGAEPLYFLDYIATGKNEPAKLEQVVAGVAEGCVQAGAGLIGGETAEMPGMYGKDDYDLAGFAVGVAEKSQIIDGSKVKEGDVLLGLASSGIHSNGYSLVRRVFADYTGEEELPELEGKKLKDVLLEPTRIYVKAALPLIKEELVNGIAHITGGGFIENVPRMFGDDLAAEIEEDKVPVLPIFKALEKYGEIKHDEMFEIFNMGIGLMLAVSPEKVDRVKEVLDEPVYELGRIVKKADASVVIK</sequence>
<keyword id="KW-0067">ATP-binding</keyword>
<keyword id="KW-0963">Cytoplasm</keyword>
<keyword id="KW-0436">Ligase</keyword>
<keyword id="KW-0547">Nucleotide-binding</keyword>
<keyword id="KW-0658">Purine biosynthesis</keyword>
<keyword id="KW-1185">Reference proteome</keyword>
<name>PUR5_STRMU</name>
<feature type="chain" id="PRO_0000148258" description="Phosphoribosylformylglycinamidine cyclo-ligase">
    <location>
        <begin position="1"/>
        <end position="340"/>
    </location>
</feature>
<protein>
    <recommendedName>
        <fullName evidence="1">Phosphoribosylformylglycinamidine cyclo-ligase</fullName>
        <ecNumber evidence="1">6.3.3.1</ecNumber>
    </recommendedName>
    <alternativeName>
        <fullName evidence="1">AIR synthase</fullName>
    </alternativeName>
    <alternativeName>
        <fullName evidence="1">AIRS</fullName>
    </alternativeName>
    <alternativeName>
        <fullName evidence="1">Phosphoribosyl-aminoimidazole synthetase</fullName>
    </alternativeName>
</protein>
<accession>Q8DWL1</accession>
<comment type="catalytic activity">
    <reaction evidence="1">
        <text>2-formamido-N(1)-(5-O-phospho-beta-D-ribosyl)acetamidine + ATP = 5-amino-1-(5-phospho-beta-D-ribosyl)imidazole + ADP + phosphate + H(+)</text>
        <dbReference type="Rhea" id="RHEA:23032"/>
        <dbReference type="ChEBI" id="CHEBI:15378"/>
        <dbReference type="ChEBI" id="CHEBI:30616"/>
        <dbReference type="ChEBI" id="CHEBI:43474"/>
        <dbReference type="ChEBI" id="CHEBI:137981"/>
        <dbReference type="ChEBI" id="CHEBI:147287"/>
        <dbReference type="ChEBI" id="CHEBI:456216"/>
        <dbReference type="EC" id="6.3.3.1"/>
    </reaction>
</comment>
<comment type="pathway">
    <text evidence="1">Purine metabolism; IMP biosynthesis via de novo pathway; 5-amino-1-(5-phospho-D-ribosyl)imidazole from N(2)-formyl-N(1)-(5-phospho-D-ribosyl)glycinamide: step 2/2.</text>
</comment>
<comment type="subcellular location">
    <subcellularLocation>
        <location evidence="1">Cytoplasm</location>
    </subcellularLocation>
</comment>
<comment type="similarity">
    <text evidence="1">Belongs to the AIR synthase family.</text>
</comment>
<gene>
    <name evidence="1" type="primary">purM</name>
    <name type="ordered locus">SMU_34</name>
</gene>
<organism>
    <name type="scientific">Streptococcus mutans serotype c (strain ATCC 700610 / UA159)</name>
    <dbReference type="NCBI Taxonomy" id="210007"/>
    <lineage>
        <taxon>Bacteria</taxon>
        <taxon>Bacillati</taxon>
        <taxon>Bacillota</taxon>
        <taxon>Bacilli</taxon>
        <taxon>Lactobacillales</taxon>
        <taxon>Streptococcaceae</taxon>
        <taxon>Streptococcus</taxon>
    </lineage>
</organism>
<reference key="1">
    <citation type="journal article" date="2002" name="Proc. Natl. Acad. Sci. U.S.A.">
        <title>Genome sequence of Streptococcus mutans UA159, a cariogenic dental pathogen.</title>
        <authorList>
            <person name="Ajdic D.J."/>
            <person name="McShan W.M."/>
            <person name="McLaughlin R.E."/>
            <person name="Savic G."/>
            <person name="Chang J."/>
            <person name="Carson M.B."/>
            <person name="Primeaux C."/>
            <person name="Tian R."/>
            <person name="Kenton S."/>
            <person name="Jia H.G."/>
            <person name="Lin S.P."/>
            <person name="Qian Y."/>
            <person name="Li S."/>
            <person name="Zhu H."/>
            <person name="Najar F.Z."/>
            <person name="Lai H."/>
            <person name="White J."/>
            <person name="Roe B.A."/>
            <person name="Ferretti J.J."/>
        </authorList>
    </citation>
    <scope>NUCLEOTIDE SEQUENCE [LARGE SCALE GENOMIC DNA]</scope>
    <source>
        <strain>ATCC 700610 / UA159</strain>
    </source>
</reference>